<feature type="chain" id="PRO_0000113611" description="Serine hydroxymethyltransferase">
    <location>
        <begin position="1"/>
        <end position="426"/>
    </location>
</feature>
<feature type="binding site" evidence="1">
    <location>
        <position position="118"/>
    </location>
    <ligand>
        <name>(6S)-5,6,7,8-tetrahydrofolate</name>
        <dbReference type="ChEBI" id="CHEBI:57453"/>
    </ligand>
</feature>
<feature type="binding site" evidence="1">
    <location>
        <begin position="122"/>
        <end position="124"/>
    </location>
    <ligand>
        <name>(6S)-5,6,7,8-tetrahydrofolate</name>
        <dbReference type="ChEBI" id="CHEBI:57453"/>
    </ligand>
</feature>
<feature type="site" description="Plays an important role in substrate specificity" evidence="1">
    <location>
        <position position="226"/>
    </location>
</feature>
<feature type="modified residue" description="N6-(pyridoxal phosphate)lysine" evidence="1">
    <location>
        <position position="227"/>
    </location>
</feature>
<comment type="function">
    <text evidence="1">Catalyzes the reversible interconversion of serine and glycine with tetrahydrofolate (THF) serving as the one-carbon carrier. This reaction serves as the major source of one-carbon groups required for the biosynthesis of purines, thymidylate, methionine, and other important biomolecules. Also exhibits THF-independent aldolase activity toward beta-hydroxyamino acids, producing glycine and aldehydes, via a retro-aldol mechanism.</text>
</comment>
<comment type="catalytic activity">
    <reaction evidence="1">
        <text>(6R)-5,10-methylene-5,6,7,8-tetrahydrofolate + glycine + H2O = (6S)-5,6,7,8-tetrahydrofolate + L-serine</text>
        <dbReference type="Rhea" id="RHEA:15481"/>
        <dbReference type="ChEBI" id="CHEBI:15377"/>
        <dbReference type="ChEBI" id="CHEBI:15636"/>
        <dbReference type="ChEBI" id="CHEBI:33384"/>
        <dbReference type="ChEBI" id="CHEBI:57305"/>
        <dbReference type="ChEBI" id="CHEBI:57453"/>
        <dbReference type="EC" id="2.1.2.1"/>
    </reaction>
</comment>
<comment type="cofactor">
    <cofactor evidence="1">
        <name>pyridoxal 5'-phosphate</name>
        <dbReference type="ChEBI" id="CHEBI:597326"/>
    </cofactor>
</comment>
<comment type="pathway">
    <text evidence="1">One-carbon metabolism; tetrahydrofolate interconversion.</text>
</comment>
<comment type="pathway">
    <text evidence="1">Amino-acid biosynthesis; glycine biosynthesis; glycine from L-serine: step 1/1.</text>
</comment>
<comment type="subunit">
    <text evidence="1">Homodimer.</text>
</comment>
<comment type="subcellular location">
    <subcellularLocation>
        <location evidence="1">Cytoplasm</location>
    </subcellularLocation>
</comment>
<comment type="similarity">
    <text evidence="1">Belongs to the SHMT family.</text>
</comment>
<evidence type="ECO:0000255" key="1">
    <source>
        <dbReference type="HAMAP-Rule" id="MF_00051"/>
    </source>
</evidence>
<accession>Q9X794</accession>
<proteinExistence type="inferred from homology"/>
<protein>
    <recommendedName>
        <fullName evidence="1">Serine hydroxymethyltransferase</fullName>
        <shortName evidence="1">SHMT</shortName>
        <shortName evidence="1">Serine methylase</shortName>
        <ecNumber evidence="1">2.1.2.1</ecNumber>
    </recommendedName>
</protein>
<gene>
    <name evidence="1" type="primary">glyA</name>
    <name type="ordered locus">ML1953</name>
    <name type="ORF">MLCB1222.22</name>
</gene>
<dbReference type="EC" id="2.1.2.1" evidence="1"/>
<dbReference type="EMBL" id="AL049491">
    <property type="protein sequence ID" value="CAB39828.1"/>
    <property type="molecule type" value="Genomic_DNA"/>
</dbReference>
<dbReference type="EMBL" id="AL583923">
    <property type="protein sequence ID" value="CAC30908.1"/>
    <property type="molecule type" value="Genomic_DNA"/>
</dbReference>
<dbReference type="PIR" id="D87153">
    <property type="entry name" value="D87153"/>
</dbReference>
<dbReference type="RefSeq" id="NP_302318.1">
    <property type="nucleotide sequence ID" value="NC_002677.1"/>
</dbReference>
<dbReference type="RefSeq" id="WP_010908639.1">
    <property type="nucleotide sequence ID" value="NC_002677.1"/>
</dbReference>
<dbReference type="SMR" id="Q9X794"/>
<dbReference type="STRING" id="272631.gene:17575805"/>
<dbReference type="KEGG" id="mle:ML1953"/>
<dbReference type="PATRIC" id="fig|272631.5.peg.3702"/>
<dbReference type="Leproma" id="ML1953"/>
<dbReference type="eggNOG" id="COG0112">
    <property type="taxonomic scope" value="Bacteria"/>
</dbReference>
<dbReference type="HOGENOM" id="CLU_022477_2_1_11"/>
<dbReference type="OrthoDB" id="9803846at2"/>
<dbReference type="UniPathway" id="UPA00193"/>
<dbReference type="UniPathway" id="UPA00288">
    <property type="reaction ID" value="UER01023"/>
</dbReference>
<dbReference type="Proteomes" id="UP000000806">
    <property type="component" value="Chromosome"/>
</dbReference>
<dbReference type="GO" id="GO:0005829">
    <property type="term" value="C:cytosol"/>
    <property type="evidence" value="ECO:0007669"/>
    <property type="project" value="TreeGrafter"/>
</dbReference>
<dbReference type="GO" id="GO:0004372">
    <property type="term" value="F:glycine hydroxymethyltransferase activity"/>
    <property type="evidence" value="ECO:0007669"/>
    <property type="project" value="UniProtKB-UniRule"/>
</dbReference>
<dbReference type="GO" id="GO:0030170">
    <property type="term" value="F:pyridoxal phosphate binding"/>
    <property type="evidence" value="ECO:0007669"/>
    <property type="project" value="UniProtKB-UniRule"/>
</dbReference>
<dbReference type="GO" id="GO:0019264">
    <property type="term" value="P:glycine biosynthetic process from serine"/>
    <property type="evidence" value="ECO:0007669"/>
    <property type="project" value="UniProtKB-UniRule"/>
</dbReference>
<dbReference type="GO" id="GO:0035999">
    <property type="term" value="P:tetrahydrofolate interconversion"/>
    <property type="evidence" value="ECO:0007669"/>
    <property type="project" value="UniProtKB-UniRule"/>
</dbReference>
<dbReference type="CDD" id="cd00378">
    <property type="entry name" value="SHMT"/>
    <property type="match status" value="1"/>
</dbReference>
<dbReference type="FunFam" id="3.40.640.10:FF:000001">
    <property type="entry name" value="Serine hydroxymethyltransferase"/>
    <property type="match status" value="1"/>
</dbReference>
<dbReference type="Gene3D" id="3.90.1150.10">
    <property type="entry name" value="Aspartate Aminotransferase, domain 1"/>
    <property type="match status" value="1"/>
</dbReference>
<dbReference type="Gene3D" id="3.40.640.10">
    <property type="entry name" value="Type I PLP-dependent aspartate aminotransferase-like (Major domain)"/>
    <property type="match status" value="1"/>
</dbReference>
<dbReference type="HAMAP" id="MF_00051">
    <property type="entry name" value="SHMT"/>
    <property type="match status" value="1"/>
</dbReference>
<dbReference type="InterPro" id="IPR015424">
    <property type="entry name" value="PyrdxlP-dep_Trfase"/>
</dbReference>
<dbReference type="InterPro" id="IPR015421">
    <property type="entry name" value="PyrdxlP-dep_Trfase_major"/>
</dbReference>
<dbReference type="InterPro" id="IPR015422">
    <property type="entry name" value="PyrdxlP-dep_Trfase_small"/>
</dbReference>
<dbReference type="InterPro" id="IPR001085">
    <property type="entry name" value="Ser_HO-MeTrfase"/>
</dbReference>
<dbReference type="InterPro" id="IPR049943">
    <property type="entry name" value="Ser_HO-MeTrfase-like"/>
</dbReference>
<dbReference type="InterPro" id="IPR019798">
    <property type="entry name" value="Ser_HO-MeTrfase_PLP_BS"/>
</dbReference>
<dbReference type="InterPro" id="IPR039429">
    <property type="entry name" value="SHMT-like_dom"/>
</dbReference>
<dbReference type="NCBIfam" id="NF000586">
    <property type="entry name" value="PRK00011.1"/>
    <property type="match status" value="1"/>
</dbReference>
<dbReference type="PANTHER" id="PTHR11680">
    <property type="entry name" value="SERINE HYDROXYMETHYLTRANSFERASE"/>
    <property type="match status" value="1"/>
</dbReference>
<dbReference type="PANTHER" id="PTHR11680:SF35">
    <property type="entry name" value="SERINE HYDROXYMETHYLTRANSFERASE 1"/>
    <property type="match status" value="1"/>
</dbReference>
<dbReference type="Pfam" id="PF00464">
    <property type="entry name" value="SHMT"/>
    <property type="match status" value="1"/>
</dbReference>
<dbReference type="PIRSF" id="PIRSF000412">
    <property type="entry name" value="SHMT"/>
    <property type="match status" value="1"/>
</dbReference>
<dbReference type="SUPFAM" id="SSF53383">
    <property type="entry name" value="PLP-dependent transferases"/>
    <property type="match status" value="1"/>
</dbReference>
<dbReference type="PROSITE" id="PS00096">
    <property type="entry name" value="SHMT"/>
    <property type="match status" value="1"/>
</dbReference>
<name>GLYA_MYCLE</name>
<reference key="1">
    <citation type="journal article" date="2001" name="Nature">
        <title>Massive gene decay in the leprosy bacillus.</title>
        <authorList>
            <person name="Cole S.T."/>
            <person name="Eiglmeier K."/>
            <person name="Parkhill J."/>
            <person name="James K.D."/>
            <person name="Thomson N.R."/>
            <person name="Wheeler P.R."/>
            <person name="Honore N."/>
            <person name="Garnier T."/>
            <person name="Churcher C.M."/>
            <person name="Harris D.E."/>
            <person name="Mungall K.L."/>
            <person name="Basham D."/>
            <person name="Brown D."/>
            <person name="Chillingworth T."/>
            <person name="Connor R."/>
            <person name="Davies R.M."/>
            <person name="Devlin K."/>
            <person name="Duthoy S."/>
            <person name="Feltwell T."/>
            <person name="Fraser A."/>
            <person name="Hamlin N."/>
            <person name="Holroyd S."/>
            <person name="Hornsby T."/>
            <person name="Jagels K."/>
            <person name="Lacroix C."/>
            <person name="Maclean J."/>
            <person name="Moule S."/>
            <person name="Murphy L.D."/>
            <person name="Oliver K."/>
            <person name="Quail M.A."/>
            <person name="Rajandream M.A."/>
            <person name="Rutherford K.M."/>
            <person name="Rutter S."/>
            <person name="Seeger K."/>
            <person name="Simon S."/>
            <person name="Simmonds M."/>
            <person name="Skelton J."/>
            <person name="Squares R."/>
            <person name="Squares S."/>
            <person name="Stevens K."/>
            <person name="Taylor K."/>
            <person name="Whitehead S."/>
            <person name="Woodward J.R."/>
            <person name="Barrell B.G."/>
        </authorList>
    </citation>
    <scope>NUCLEOTIDE SEQUENCE [LARGE SCALE GENOMIC DNA]</scope>
    <source>
        <strain>TN</strain>
    </source>
</reference>
<sequence length="426" mass="45225">MVAPLAEVDPDIAELLGKELGRQRDTLEMIASENFVPRSVLQAQGSVLTNKYAEGLPGRRYYDGCEHVDVVENIARDRAKALFGADFANVQPHSGAQANAAVLHALMSPGERLLGLDLANGGHLTHGMRLNFSGKLYETGFYGVDATTHLIDMDAVRAKALEFRPKVLIAGWSAYPRILDFAAFRSIADEVGAKLWVDMAHFAGLVAVGLHPSPVPHADVVSTTVHKTLGGGRSGLILGKQEFATAINSAVFPGQQGGPLMHVIAGKAVALKIATTPEFTDRQQRTLAGARILADRLTAADVTKAGVSVVSGGTDVHLVLVDLRNSPFDGQAAEDLLHEVGITVNRNVVPNDPRPPMVTSGLRIGTPALATRGFGEAEFTEVADIIATVLTTGGSVDVAALRQQVTRLARDFPLYGGLEDWSLAGR</sequence>
<keyword id="KW-0028">Amino-acid biosynthesis</keyword>
<keyword id="KW-0963">Cytoplasm</keyword>
<keyword id="KW-0554">One-carbon metabolism</keyword>
<keyword id="KW-0663">Pyridoxal phosphate</keyword>
<keyword id="KW-1185">Reference proteome</keyword>
<keyword id="KW-0808">Transferase</keyword>
<organism>
    <name type="scientific">Mycobacterium leprae (strain TN)</name>
    <dbReference type="NCBI Taxonomy" id="272631"/>
    <lineage>
        <taxon>Bacteria</taxon>
        <taxon>Bacillati</taxon>
        <taxon>Actinomycetota</taxon>
        <taxon>Actinomycetes</taxon>
        <taxon>Mycobacteriales</taxon>
        <taxon>Mycobacteriaceae</taxon>
        <taxon>Mycobacterium</taxon>
    </lineage>
</organism>